<name>COAD_ALTMD</name>
<accession>B4S2C7</accession>
<accession>F2G1V9</accession>
<comment type="function">
    <text evidence="1">Reversibly transfers an adenylyl group from ATP to 4'-phosphopantetheine, yielding dephospho-CoA (dPCoA) and pyrophosphate.</text>
</comment>
<comment type="catalytic activity">
    <reaction evidence="1">
        <text>(R)-4'-phosphopantetheine + ATP + H(+) = 3'-dephospho-CoA + diphosphate</text>
        <dbReference type="Rhea" id="RHEA:19801"/>
        <dbReference type="ChEBI" id="CHEBI:15378"/>
        <dbReference type="ChEBI" id="CHEBI:30616"/>
        <dbReference type="ChEBI" id="CHEBI:33019"/>
        <dbReference type="ChEBI" id="CHEBI:57328"/>
        <dbReference type="ChEBI" id="CHEBI:61723"/>
        <dbReference type="EC" id="2.7.7.3"/>
    </reaction>
</comment>
<comment type="cofactor">
    <cofactor evidence="1">
        <name>Mg(2+)</name>
        <dbReference type="ChEBI" id="CHEBI:18420"/>
    </cofactor>
</comment>
<comment type="pathway">
    <text evidence="1">Cofactor biosynthesis; coenzyme A biosynthesis; CoA from (R)-pantothenate: step 4/5.</text>
</comment>
<comment type="subunit">
    <text evidence="1">Homohexamer.</text>
</comment>
<comment type="subcellular location">
    <subcellularLocation>
        <location evidence="1">Cytoplasm</location>
    </subcellularLocation>
</comment>
<comment type="similarity">
    <text evidence="1">Belongs to the bacterial CoaD family.</text>
</comment>
<proteinExistence type="inferred from homology"/>
<reference key="1">
    <citation type="journal article" date="2008" name="ISME J.">
        <title>Comparative genomics of two ecotypes of the marine planktonic copiotroph Alteromonas macleodii suggests alternative lifestyles associated with different kinds of particulate organic matter.</title>
        <authorList>
            <person name="Ivars-Martinez E."/>
            <person name="Martin-Cuadrado A.-B."/>
            <person name="D'Auria G."/>
            <person name="Mira A."/>
            <person name="Ferriera S."/>
            <person name="Johnson J."/>
            <person name="Friedman R."/>
            <person name="Rodriguez-Valera F."/>
        </authorList>
    </citation>
    <scope>NUCLEOTIDE SEQUENCE [LARGE SCALE GENOMIC DNA]</scope>
    <source>
        <strain>DSM 17117 / CIP 110805 / LMG 28347 / Deep ecotype</strain>
    </source>
</reference>
<protein>
    <recommendedName>
        <fullName evidence="1">Phosphopantetheine adenylyltransferase</fullName>
        <ecNumber evidence="1">2.7.7.3</ecNumber>
    </recommendedName>
    <alternativeName>
        <fullName evidence="1">Dephospho-CoA pyrophosphorylase</fullName>
    </alternativeName>
    <alternativeName>
        <fullName evidence="1">Pantetheine-phosphate adenylyltransferase</fullName>
        <shortName evidence="1">PPAT</shortName>
    </alternativeName>
</protein>
<keyword id="KW-0067">ATP-binding</keyword>
<keyword id="KW-0173">Coenzyme A biosynthesis</keyword>
<keyword id="KW-0963">Cytoplasm</keyword>
<keyword id="KW-0460">Magnesium</keyword>
<keyword id="KW-0547">Nucleotide-binding</keyword>
<keyword id="KW-0548">Nucleotidyltransferase</keyword>
<keyword id="KW-0808">Transferase</keyword>
<organism>
    <name type="scientific">Alteromonas mediterranea (strain DSM 17117 / CIP 110805 / LMG 28347 / Deep ecotype)</name>
    <dbReference type="NCBI Taxonomy" id="1774373"/>
    <lineage>
        <taxon>Bacteria</taxon>
        <taxon>Pseudomonadati</taxon>
        <taxon>Pseudomonadota</taxon>
        <taxon>Gammaproteobacteria</taxon>
        <taxon>Alteromonadales</taxon>
        <taxon>Alteromonadaceae</taxon>
        <taxon>Alteromonas/Salinimonas group</taxon>
        <taxon>Alteromonas</taxon>
    </lineage>
</organism>
<sequence>MHTRALYPGTFDPITNGHADLIERASQLFSHVIVAIASNPSKKPLFTLEERVEMIKKVTADLPNVEVVGFTGLLADFADEQNATILIRGLRAVSDFEYEFQLANMNRRLNPKLESVFLTPAEENSFISSTLVKEVALHRGAVSGFCHPVVEQALRDRLGKKN</sequence>
<evidence type="ECO:0000255" key="1">
    <source>
        <dbReference type="HAMAP-Rule" id="MF_00151"/>
    </source>
</evidence>
<dbReference type="EC" id="2.7.7.3" evidence="1"/>
<dbReference type="EMBL" id="CP001103">
    <property type="protein sequence ID" value="AEA96206.1"/>
    <property type="molecule type" value="Genomic_DNA"/>
</dbReference>
<dbReference type="RefSeq" id="WP_012516580.1">
    <property type="nucleotide sequence ID" value="NC_011138.3"/>
</dbReference>
<dbReference type="SMR" id="B4S2C7"/>
<dbReference type="GeneID" id="56340681"/>
<dbReference type="KEGG" id="amc:MADE_1000285"/>
<dbReference type="HOGENOM" id="CLU_100149_0_1_6"/>
<dbReference type="UniPathway" id="UPA00241">
    <property type="reaction ID" value="UER00355"/>
</dbReference>
<dbReference type="Proteomes" id="UP000001870">
    <property type="component" value="Chromosome"/>
</dbReference>
<dbReference type="GO" id="GO:0005737">
    <property type="term" value="C:cytoplasm"/>
    <property type="evidence" value="ECO:0007669"/>
    <property type="project" value="UniProtKB-SubCell"/>
</dbReference>
<dbReference type="GO" id="GO:0005524">
    <property type="term" value="F:ATP binding"/>
    <property type="evidence" value="ECO:0007669"/>
    <property type="project" value="UniProtKB-KW"/>
</dbReference>
<dbReference type="GO" id="GO:0004595">
    <property type="term" value="F:pantetheine-phosphate adenylyltransferase activity"/>
    <property type="evidence" value="ECO:0007669"/>
    <property type="project" value="UniProtKB-UniRule"/>
</dbReference>
<dbReference type="GO" id="GO:0015937">
    <property type="term" value="P:coenzyme A biosynthetic process"/>
    <property type="evidence" value="ECO:0007669"/>
    <property type="project" value="UniProtKB-UniRule"/>
</dbReference>
<dbReference type="CDD" id="cd02163">
    <property type="entry name" value="PPAT"/>
    <property type="match status" value="1"/>
</dbReference>
<dbReference type="FunFam" id="3.40.50.620:FF:000012">
    <property type="entry name" value="Phosphopantetheine adenylyltransferase"/>
    <property type="match status" value="1"/>
</dbReference>
<dbReference type="Gene3D" id="3.40.50.620">
    <property type="entry name" value="HUPs"/>
    <property type="match status" value="1"/>
</dbReference>
<dbReference type="HAMAP" id="MF_00151">
    <property type="entry name" value="PPAT_bact"/>
    <property type="match status" value="1"/>
</dbReference>
<dbReference type="InterPro" id="IPR004821">
    <property type="entry name" value="Cyt_trans-like"/>
</dbReference>
<dbReference type="InterPro" id="IPR001980">
    <property type="entry name" value="PPAT"/>
</dbReference>
<dbReference type="InterPro" id="IPR014729">
    <property type="entry name" value="Rossmann-like_a/b/a_fold"/>
</dbReference>
<dbReference type="NCBIfam" id="TIGR01510">
    <property type="entry name" value="coaD_prev_kdtB"/>
    <property type="match status" value="1"/>
</dbReference>
<dbReference type="NCBIfam" id="TIGR00125">
    <property type="entry name" value="cyt_tran_rel"/>
    <property type="match status" value="1"/>
</dbReference>
<dbReference type="PANTHER" id="PTHR21342">
    <property type="entry name" value="PHOSPHOPANTETHEINE ADENYLYLTRANSFERASE"/>
    <property type="match status" value="1"/>
</dbReference>
<dbReference type="PANTHER" id="PTHR21342:SF1">
    <property type="entry name" value="PHOSPHOPANTETHEINE ADENYLYLTRANSFERASE"/>
    <property type="match status" value="1"/>
</dbReference>
<dbReference type="Pfam" id="PF01467">
    <property type="entry name" value="CTP_transf_like"/>
    <property type="match status" value="1"/>
</dbReference>
<dbReference type="PRINTS" id="PR01020">
    <property type="entry name" value="LPSBIOSNTHSS"/>
</dbReference>
<dbReference type="SUPFAM" id="SSF52374">
    <property type="entry name" value="Nucleotidylyl transferase"/>
    <property type="match status" value="1"/>
</dbReference>
<gene>
    <name evidence="1" type="primary">coaD</name>
    <name type="ordered locus">MADE_1000285</name>
</gene>
<feature type="chain" id="PRO_1000096759" description="Phosphopantetheine adenylyltransferase">
    <location>
        <begin position="1"/>
        <end position="162"/>
    </location>
</feature>
<feature type="binding site" evidence="1">
    <location>
        <begin position="10"/>
        <end position="11"/>
    </location>
    <ligand>
        <name>ATP</name>
        <dbReference type="ChEBI" id="CHEBI:30616"/>
    </ligand>
</feature>
<feature type="binding site" evidence="1">
    <location>
        <position position="10"/>
    </location>
    <ligand>
        <name>substrate</name>
    </ligand>
</feature>
<feature type="binding site" evidence="1">
    <location>
        <position position="18"/>
    </location>
    <ligand>
        <name>ATP</name>
        <dbReference type="ChEBI" id="CHEBI:30616"/>
    </ligand>
</feature>
<feature type="binding site" evidence="1">
    <location>
        <position position="42"/>
    </location>
    <ligand>
        <name>substrate</name>
    </ligand>
</feature>
<feature type="binding site" evidence="1">
    <location>
        <position position="74"/>
    </location>
    <ligand>
        <name>substrate</name>
    </ligand>
</feature>
<feature type="binding site" evidence="1">
    <location>
        <position position="88"/>
    </location>
    <ligand>
        <name>substrate</name>
    </ligand>
</feature>
<feature type="binding site" evidence="1">
    <location>
        <begin position="89"/>
        <end position="91"/>
    </location>
    <ligand>
        <name>ATP</name>
        <dbReference type="ChEBI" id="CHEBI:30616"/>
    </ligand>
</feature>
<feature type="binding site" evidence="1">
    <location>
        <position position="99"/>
    </location>
    <ligand>
        <name>ATP</name>
        <dbReference type="ChEBI" id="CHEBI:30616"/>
    </ligand>
</feature>
<feature type="binding site" evidence="1">
    <location>
        <begin position="124"/>
        <end position="130"/>
    </location>
    <ligand>
        <name>ATP</name>
        <dbReference type="ChEBI" id="CHEBI:30616"/>
    </ligand>
</feature>
<feature type="site" description="Transition state stabilizer" evidence="1">
    <location>
        <position position="18"/>
    </location>
</feature>